<gene>
    <name evidence="1" type="primary">rplR</name>
    <name type="ordered locus">OCAR_5693</name>
    <name type="ordered locus">OCA5_c23140</name>
</gene>
<sequence>MSKLKITNARRKQRVRIALRRAAGGRPRLSVFRSSKHIYAQVIDDQKGETLASASSLEKTMREGGKTGANIDAAKAVGKLLAERAVKNGVKEVVFDRGGYLYHGRVKALADAARESGLSF</sequence>
<protein>
    <recommendedName>
        <fullName evidence="1">Large ribosomal subunit protein uL18</fullName>
    </recommendedName>
    <alternativeName>
        <fullName evidence="2">50S ribosomal protein L18</fullName>
    </alternativeName>
</protein>
<reference key="1">
    <citation type="journal article" date="2008" name="J. Bacteriol.">
        <title>Genome sequence of the chemolithoautotrophic bacterium Oligotropha carboxidovorans OM5T.</title>
        <authorList>
            <person name="Paul D."/>
            <person name="Bridges S."/>
            <person name="Burgess S.C."/>
            <person name="Dandass Y."/>
            <person name="Lawrence M.L."/>
        </authorList>
    </citation>
    <scope>NUCLEOTIDE SEQUENCE [LARGE SCALE GENOMIC DNA]</scope>
    <source>
        <strain>ATCC 49405 / DSM 1227 / KCTC 32145 / OM5</strain>
    </source>
</reference>
<reference key="2">
    <citation type="journal article" date="2011" name="J. Bacteriol.">
        <title>Complete genome sequences of the chemolithoautotrophic Oligotropha carboxidovorans strains OM4 and OM5.</title>
        <authorList>
            <person name="Volland S."/>
            <person name="Rachinger M."/>
            <person name="Strittmatter A."/>
            <person name="Daniel R."/>
            <person name="Gottschalk G."/>
            <person name="Meyer O."/>
        </authorList>
    </citation>
    <scope>NUCLEOTIDE SEQUENCE [LARGE SCALE GENOMIC DNA]</scope>
    <source>
        <strain>ATCC 49405 / DSM 1227 / KCTC 32145 / OM5</strain>
    </source>
</reference>
<organism>
    <name type="scientific">Afipia carboxidovorans (strain ATCC 49405 / DSM 1227 / KCTC 32145 / OM5)</name>
    <name type="common">Oligotropha carboxidovorans</name>
    <dbReference type="NCBI Taxonomy" id="504832"/>
    <lineage>
        <taxon>Bacteria</taxon>
        <taxon>Pseudomonadati</taxon>
        <taxon>Pseudomonadota</taxon>
        <taxon>Alphaproteobacteria</taxon>
        <taxon>Hyphomicrobiales</taxon>
        <taxon>Nitrobacteraceae</taxon>
        <taxon>Afipia</taxon>
    </lineage>
</organism>
<dbReference type="EMBL" id="CP001196">
    <property type="protein sequence ID" value="ACI92821.1"/>
    <property type="molecule type" value="Genomic_DNA"/>
</dbReference>
<dbReference type="EMBL" id="CP002826">
    <property type="protein sequence ID" value="AEI07014.1"/>
    <property type="molecule type" value="Genomic_DNA"/>
</dbReference>
<dbReference type="RefSeq" id="WP_012562850.1">
    <property type="nucleotide sequence ID" value="NC_015684.1"/>
</dbReference>
<dbReference type="SMR" id="B6JEY1"/>
<dbReference type="STRING" id="504832.OCA5_c23140"/>
<dbReference type="KEGG" id="oca:OCAR_5693"/>
<dbReference type="KEGG" id="ocg:OCA5_c23140"/>
<dbReference type="PATRIC" id="fig|504832.7.peg.2439"/>
<dbReference type="eggNOG" id="COG0256">
    <property type="taxonomic scope" value="Bacteria"/>
</dbReference>
<dbReference type="HOGENOM" id="CLU_098841_0_1_5"/>
<dbReference type="OrthoDB" id="9810939at2"/>
<dbReference type="Proteomes" id="UP000007730">
    <property type="component" value="Chromosome"/>
</dbReference>
<dbReference type="GO" id="GO:0022625">
    <property type="term" value="C:cytosolic large ribosomal subunit"/>
    <property type="evidence" value="ECO:0007669"/>
    <property type="project" value="TreeGrafter"/>
</dbReference>
<dbReference type="GO" id="GO:0008097">
    <property type="term" value="F:5S rRNA binding"/>
    <property type="evidence" value="ECO:0007669"/>
    <property type="project" value="TreeGrafter"/>
</dbReference>
<dbReference type="GO" id="GO:0003735">
    <property type="term" value="F:structural constituent of ribosome"/>
    <property type="evidence" value="ECO:0007669"/>
    <property type="project" value="InterPro"/>
</dbReference>
<dbReference type="GO" id="GO:0006412">
    <property type="term" value="P:translation"/>
    <property type="evidence" value="ECO:0007669"/>
    <property type="project" value="UniProtKB-UniRule"/>
</dbReference>
<dbReference type="CDD" id="cd00432">
    <property type="entry name" value="Ribosomal_L18_L5e"/>
    <property type="match status" value="1"/>
</dbReference>
<dbReference type="FunFam" id="3.30.420.100:FF:000001">
    <property type="entry name" value="50S ribosomal protein L18"/>
    <property type="match status" value="1"/>
</dbReference>
<dbReference type="Gene3D" id="3.30.420.100">
    <property type="match status" value="1"/>
</dbReference>
<dbReference type="HAMAP" id="MF_01337_B">
    <property type="entry name" value="Ribosomal_uL18_B"/>
    <property type="match status" value="1"/>
</dbReference>
<dbReference type="InterPro" id="IPR004389">
    <property type="entry name" value="Ribosomal_uL18_bac-type"/>
</dbReference>
<dbReference type="InterPro" id="IPR005484">
    <property type="entry name" value="Ribosomal_uL18_bac/euk"/>
</dbReference>
<dbReference type="NCBIfam" id="TIGR00060">
    <property type="entry name" value="L18_bact"/>
    <property type="match status" value="1"/>
</dbReference>
<dbReference type="PANTHER" id="PTHR12899">
    <property type="entry name" value="39S RIBOSOMAL PROTEIN L18, MITOCHONDRIAL"/>
    <property type="match status" value="1"/>
</dbReference>
<dbReference type="PANTHER" id="PTHR12899:SF3">
    <property type="entry name" value="LARGE RIBOSOMAL SUBUNIT PROTEIN UL18M"/>
    <property type="match status" value="1"/>
</dbReference>
<dbReference type="Pfam" id="PF00861">
    <property type="entry name" value="Ribosomal_L18p"/>
    <property type="match status" value="1"/>
</dbReference>
<dbReference type="SUPFAM" id="SSF53137">
    <property type="entry name" value="Translational machinery components"/>
    <property type="match status" value="1"/>
</dbReference>
<comment type="function">
    <text evidence="1">This is one of the proteins that bind and probably mediate the attachment of the 5S RNA into the large ribosomal subunit, where it forms part of the central protuberance.</text>
</comment>
<comment type="subunit">
    <text evidence="1">Part of the 50S ribosomal subunit; part of the 5S rRNA/L5/L18/L25 subcomplex. Contacts the 5S and 23S rRNAs.</text>
</comment>
<comment type="similarity">
    <text evidence="1">Belongs to the universal ribosomal protein uL18 family.</text>
</comment>
<feature type="chain" id="PRO_1000142694" description="Large ribosomal subunit protein uL18">
    <location>
        <begin position="1"/>
        <end position="120"/>
    </location>
</feature>
<evidence type="ECO:0000255" key="1">
    <source>
        <dbReference type="HAMAP-Rule" id="MF_01337"/>
    </source>
</evidence>
<evidence type="ECO:0000305" key="2"/>
<keyword id="KW-1185">Reference proteome</keyword>
<keyword id="KW-0687">Ribonucleoprotein</keyword>
<keyword id="KW-0689">Ribosomal protein</keyword>
<keyword id="KW-0694">RNA-binding</keyword>
<keyword id="KW-0699">rRNA-binding</keyword>
<proteinExistence type="inferred from homology"/>
<accession>B6JEY1</accession>
<accession>F8BZB1</accession>
<name>RL18_AFIC5</name>